<protein>
    <recommendedName>
        <fullName evidence="1">Small ribosomal subunit protein uS9</fullName>
    </recommendedName>
    <alternativeName>
        <fullName evidence="3">30S ribosomal protein S9</fullName>
    </alternativeName>
</protein>
<comment type="similarity">
    <text evidence="1">Belongs to the universal ribosomal protein uS9 family.</text>
</comment>
<accession>Q03PZ0</accession>
<organism>
    <name type="scientific">Levilactobacillus brevis (strain ATCC 367 / BCRC 12310 / CIP 105137 / JCM 1170 / LMG 11437 / NCIMB 947 / NCTC 947)</name>
    <name type="common">Lactobacillus brevis</name>
    <dbReference type="NCBI Taxonomy" id="387344"/>
    <lineage>
        <taxon>Bacteria</taxon>
        <taxon>Bacillati</taxon>
        <taxon>Bacillota</taxon>
        <taxon>Bacilli</taxon>
        <taxon>Lactobacillales</taxon>
        <taxon>Lactobacillaceae</taxon>
        <taxon>Levilactobacillus</taxon>
    </lineage>
</organism>
<name>RS9_LEVBA</name>
<keyword id="KW-1185">Reference proteome</keyword>
<keyword id="KW-0687">Ribonucleoprotein</keyword>
<keyword id="KW-0689">Ribosomal protein</keyword>
<reference key="1">
    <citation type="journal article" date="2006" name="Proc. Natl. Acad. Sci. U.S.A.">
        <title>Comparative genomics of the lactic acid bacteria.</title>
        <authorList>
            <person name="Makarova K.S."/>
            <person name="Slesarev A."/>
            <person name="Wolf Y.I."/>
            <person name="Sorokin A."/>
            <person name="Mirkin B."/>
            <person name="Koonin E.V."/>
            <person name="Pavlov A."/>
            <person name="Pavlova N."/>
            <person name="Karamychev V."/>
            <person name="Polouchine N."/>
            <person name="Shakhova V."/>
            <person name="Grigoriev I."/>
            <person name="Lou Y."/>
            <person name="Rohksar D."/>
            <person name="Lucas S."/>
            <person name="Huang K."/>
            <person name="Goodstein D.M."/>
            <person name="Hawkins T."/>
            <person name="Plengvidhya V."/>
            <person name="Welker D."/>
            <person name="Hughes J."/>
            <person name="Goh Y."/>
            <person name="Benson A."/>
            <person name="Baldwin K."/>
            <person name="Lee J.-H."/>
            <person name="Diaz-Muniz I."/>
            <person name="Dosti B."/>
            <person name="Smeianov V."/>
            <person name="Wechter W."/>
            <person name="Barabote R."/>
            <person name="Lorca G."/>
            <person name="Altermann E."/>
            <person name="Barrangou R."/>
            <person name="Ganesan B."/>
            <person name="Xie Y."/>
            <person name="Rawsthorne H."/>
            <person name="Tamir D."/>
            <person name="Parker C."/>
            <person name="Breidt F."/>
            <person name="Broadbent J.R."/>
            <person name="Hutkins R."/>
            <person name="O'Sullivan D."/>
            <person name="Steele J."/>
            <person name="Unlu G."/>
            <person name="Saier M.H. Jr."/>
            <person name="Klaenhammer T."/>
            <person name="Richardson P."/>
            <person name="Kozyavkin S."/>
            <person name="Weimer B.C."/>
            <person name="Mills D.A."/>
        </authorList>
    </citation>
    <scope>NUCLEOTIDE SEQUENCE [LARGE SCALE GENOMIC DNA]</scope>
    <source>
        <strain>ATCC 367 / BCRC 12310 / CIP 105137 / JCM 1170 / LMG 11437 / NCIMB 947 / NCTC 947</strain>
    </source>
</reference>
<proteinExistence type="inferred from homology"/>
<feature type="chain" id="PRO_1000051239" description="Small ribosomal subunit protein uS9">
    <location>
        <begin position="1"/>
        <end position="130"/>
    </location>
</feature>
<feature type="region of interest" description="Disordered" evidence="2">
    <location>
        <begin position="101"/>
        <end position="130"/>
    </location>
</feature>
<feature type="compositionally biased region" description="Basic residues" evidence="2">
    <location>
        <begin position="111"/>
        <end position="130"/>
    </location>
</feature>
<dbReference type="EMBL" id="CP000416">
    <property type="protein sequence ID" value="ABJ64732.1"/>
    <property type="molecule type" value="Genomic_DNA"/>
</dbReference>
<dbReference type="RefSeq" id="WP_011668466.1">
    <property type="nucleotide sequence ID" value="NC_008497.1"/>
</dbReference>
<dbReference type="SMR" id="Q03PZ0"/>
<dbReference type="STRING" id="387344.LVIS_1657"/>
<dbReference type="GeneID" id="84782100"/>
<dbReference type="KEGG" id="lbr:LVIS_1657"/>
<dbReference type="eggNOG" id="COG0103">
    <property type="taxonomic scope" value="Bacteria"/>
</dbReference>
<dbReference type="HOGENOM" id="CLU_046483_2_1_9"/>
<dbReference type="Proteomes" id="UP000001652">
    <property type="component" value="Chromosome"/>
</dbReference>
<dbReference type="GO" id="GO:0022627">
    <property type="term" value="C:cytosolic small ribosomal subunit"/>
    <property type="evidence" value="ECO:0007669"/>
    <property type="project" value="TreeGrafter"/>
</dbReference>
<dbReference type="GO" id="GO:0003723">
    <property type="term" value="F:RNA binding"/>
    <property type="evidence" value="ECO:0007669"/>
    <property type="project" value="TreeGrafter"/>
</dbReference>
<dbReference type="GO" id="GO:0003735">
    <property type="term" value="F:structural constituent of ribosome"/>
    <property type="evidence" value="ECO:0007669"/>
    <property type="project" value="InterPro"/>
</dbReference>
<dbReference type="GO" id="GO:0006412">
    <property type="term" value="P:translation"/>
    <property type="evidence" value="ECO:0007669"/>
    <property type="project" value="UniProtKB-UniRule"/>
</dbReference>
<dbReference type="FunFam" id="3.30.230.10:FF:000001">
    <property type="entry name" value="30S ribosomal protein S9"/>
    <property type="match status" value="1"/>
</dbReference>
<dbReference type="Gene3D" id="3.30.230.10">
    <property type="match status" value="1"/>
</dbReference>
<dbReference type="HAMAP" id="MF_00532_B">
    <property type="entry name" value="Ribosomal_uS9_B"/>
    <property type="match status" value="1"/>
</dbReference>
<dbReference type="InterPro" id="IPR020568">
    <property type="entry name" value="Ribosomal_Su5_D2-typ_SF"/>
</dbReference>
<dbReference type="InterPro" id="IPR000754">
    <property type="entry name" value="Ribosomal_uS9"/>
</dbReference>
<dbReference type="InterPro" id="IPR023035">
    <property type="entry name" value="Ribosomal_uS9_bac/plastid"/>
</dbReference>
<dbReference type="InterPro" id="IPR020574">
    <property type="entry name" value="Ribosomal_uS9_CS"/>
</dbReference>
<dbReference type="InterPro" id="IPR014721">
    <property type="entry name" value="Ribsml_uS5_D2-typ_fold_subgr"/>
</dbReference>
<dbReference type="NCBIfam" id="NF001099">
    <property type="entry name" value="PRK00132.1"/>
    <property type="match status" value="1"/>
</dbReference>
<dbReference type="PANTHER" id="PTHR21569">
    <property type="entry name" value="RIBOSOMAL PROTEIN S9"/>
    <property type="match status" value="1"/>
</dbReference>
<dbReference type="PANTHER" id="PTHR21569:SF1">
    <property type="entry name" value="SMALL RIBOSOMAL SUBUNIT PROTEIN US9M"/>
    <property type="match status" value="1"/>
</dbReference>
<dbReference type="Pfam" id="PF00380">
    <property type="entry name" value="Ribosomal_S9"/>
    <property type="match status" value="1"/>
</dbReference>
<dbReference type="SUPFAM" id="SSF54211">
    <property type="entry name" value="Ribosomal protein S5 domain 2-like"/>
    <property type="match status" value="1"/>
</dbReference>
<dbReference type="PROSITE" id="PS00360">
    <property type="entry name" value="RIBOSOMAL_S9"/>
    <property type="match status" value="1"/>
</dbReference>
<gene>
    <name evidence="1" type="primary">rpsI</name>
    <name type="ordered locus">LVIS_1657</name>
</gene>
<evidence type="ECO:0000255" key="1">
    <source>
        <dbReference type="HAMAP-Rule" id="MF_00532"/>
    </source>
</evidence>
<evidence type="ECO:0000256" key="2">
    <source>
        <dbReference type="SAM" id="MobiDB-lite"/>
    </source>
</evidence>
<evidence type="ECO:0000305" key="3"/>
<sequence length="130" mass="14326">MAQVQYRGTGRRKNSSARVRLVPGSGKIVMNNKAIEDYIPFASIREVVLQPFNVTETLGNYDALVTVRGGGFSGQAGATRHGIARALLEVDPDFRGPLKRAGLLTRDARMKERKKPGLKKARKASQFSKR</sequence>